<reference key="1">
    <citation type="submission" date="2006-05" db="EMBL/GenBank/DDBJ databases">
        <title>Complete sequence of chromosome of Silicibacter sp. TM1040.</title>
        <authorList>
            <consortium name="US DOE Joint Genome Institute"/>
            <person name="Copeland A."/>
            <person name="Lucas S."/>
            <person name="Lapidus A."/>
            <person name="Barry K."/>
            <person name="Detter J.C."/>
            <person name="Glavina del Rio T."/>
            <person name="Hammon N."/>
            <person name="Israni S."/>
            <person name="Dalin E."/>
            <person name="Tice H."/>
            <person name="Pitluck S."/>
            <person name="Brettin T."/>
            <person name="Bruce D."/>
            <person name="Han C."/>
            <person name="Tapia R."/>
            <person name="Goodwin L."/>
            <person name="Thompson L.S."/>
            <person name="Gilna P."/>
            <person name="Schmutz J."/>
            <person name="Larimer F."/>
            <person name="Land M."/>
            <person name="Hauser L."/>
            <person name="Kyrpides N."/>
            <person name="Kim E."/>
            <person name="Belas R."/>
            <person name="Moran M.A."/>
            <person name="Buchan A."/>
            <person name="Gonzalez J.M."/>
            <person name="Schell M.A."/>
            <person name="Sun F."/>
            <person name="Richardson P."/>
        </authorList>
    </citation>
    <scope>NUCLEOTIDE SEQUENCE [LARGE SCALE GENOMIC DNA]</scope>
    <source>
        <strain>TM1040</strain>
    </source>
</reference>
<feature type="chain" id="PRO_1000086057" description="Small ribosomal subunit protein uS5">
    <location>
        <begin position="1"/>
        <end position="187"/>
    </location>
</feature>
<feature type="domain" description="S5 DRBM" evidence="1">
    <location>
        <begin position="20"/>
        <end position="83"/>
    </location>
</feature>
<feature type="region of interest" description="Disordered" evidence="2">
    <location>
        <begin position="155"/>
        <end position="187"/>
    </location>
</feature>
<feature type="compositionally biased region" description="Basic and acidic residues" evidence="2">
    <location>
        <begin position="170"/>
        <end position="181"/>
    </location>
</feature>
<accession>Q1GK12</accession>
<evidence type="ECO:0000255" key="1">
    <source>
        <dbReference type="HAMAP-Rule" id="MF_01307"/>
    </source>
</evidence>
<evidence type="ECO:0000256" key="2">
    <source>
        <dbReference type="SAM" id="MobiDB-lite"/>
    </source>
</evidence>
<evidence type="ECO:0000305" key="3"/>
<dbReference type="EMBL" id="CP000377">
    <property type="protein sequence ID" value="ABF63004.1"/>
    <property type="molecule type" value="Genomic_DNA"/>
</dbReference>
<dbReference type="RefSeq" id="WP_009176874.1">
    <property type="nucleotide sequence ID" value="NC_008044.1"/>
</dbReference>
<dbReference type="SMR" id="Q1GK12"/>
<dbReference type="STRING" id="292414.TM1040_0271"/>
<dbReference type="KEGG" id="sit:TM1040_0271"/>
<dbReference type="eggNOG" id="COG0098">
    <property type="taxonomic scope" value="Bacteria"/>
</dbReference>
<dbReference type="HOGENOM" id="CLU_065898_2_2_5"/>
<dbReference type="OrthoDB" id="9809045at2"/>
<dbReference type="Proteomes" id="UP000000636">
    <property type="component" value="Chromosome"/>
</dbReference>
<dbReference type="GO" id="GO:0015935">
    <property type="term" value="C:small ribosomal subunit"/>
    <property type="evidence" value="ECO:0007669"/>
    <property type="project" value="InterPro"/>
</dbReference>
<dbReference type="GO" id="GO:0019843">
    <property type="term" value="F:rRNA binding"/>
    <property type="evidence" value="ECO:0007669"/>
    <property type="project" value="UniProtKB-UniRule"/>
</dbReference>
<dbReference type="GO" id="GO:0003735">
    <property type="term" value="F:structural constituent of ribosome"/>
    <property type="evidence" value="ECO:0007669"/>
    <property type="project" value="InterPro"/>
</dbReference>
<dbReference type="GO" id="GO:0006412">
    <property type="term" value="P:translation"/>
    <property type="evidence" value="ECO:0007669"/>
    <property type="project" value="UniProtKB-UniRule"/>
</dbReference>
<dbReference type="FunFam" id="3.30.160.20:FF:000001">
    <property type="entry name" value="30S ribosomal protein S5"/>
    <property type="match status" value="1"/>
</dbReference>
<dbReference type="FunFam" id="3.30.230.10:FF:000002">
    <property type="entry name" value="30S ribosomal protein S5"/>
    <property type="match status" value="1"/>
</dbReference>
<dbReference type="Gene3D" id="3.30.160.20">
    <property type="match status" value="1"/>
</dbReference>
<dbReference type="Gene3D" id="3.30.230.10">
    <property type="match status" value="1"/>
</dbReference>
<dbReference type="HAMAP" id="MF_01307_B">
    <property type="entry name" value="Ribosomal_uS5_B"/>
    <property type="match status" value="1"/>
</dbReference>
<dbReference type="InterPro" id="IPR020568">
    <property type="entry name" value="Ribosomal_Su5_D2-typ_SF"/>
</dbReference>
<dbReference type="InterPro" id="IPR000851">
    <property type="entry name" value="Ribosomal_uS5"/>
</dbReference>
<dbReference type="InterPro" id="IPR005712">
    <property type="entry name" value="Ribosomal_uS5_bac-type"/>
</dbReference>
<dbReference type="InterPro" id="IPR005324">
    <property type="entry name" value="Ribosomal_uS5_C"/>
</dbReference>
<dbReference type="InterPro" id="IPR013810">
    <property type="entry name" value="Ribosomal_uS5_N"/>
</dbReference>
<dbReference type="InterPro" id="IPR018192">
    <property type="entry name" value="Ribosomal_uS5_N_CS"/>
</dbReference>
<dbReference type="InterPro" id="IPR014721">
    <property type="entry name" value="Ribsml_uS5_D2-typ_fold_subgr"/>
</dbReference>
<dbReference type="NCBIfam" id="TIGR01021">
    <property type="entry name" value="rpsE_bact"/>
    <property type="match status" value="1"/>
</dbReference>
<dbReference type="PANTHER" id="PTHR48277">
    <property type="entry name" value="MITOCHONDRIAL RIBOSOMAL PROTEIN S5"/>
    <property type="match status" value="1"/>
</dbReference>
<dbReference type="PANTHER" id="PTHR48277:SF1">
    <property type="entry name" value="MITOCHONDRIAL RIBOSOMAL PROTEIN S5"/>
    <property type="match status" value="1"/>
</dbReference>
<dbReference type="Pfam" id="PF00333">
    <property type="entry name" value="Ribosomal_S5"/>
    <property type="match status" value="1"/>
</dbReference>
<dbReference type="Pfam" id="PF03719">
    <property type="entry name" value="Ribosomal_S5_C"/>
    <property type="match status" value="1"/>
</dbReference>
<dbReference type="SUPFAM" id="SSF54768">
    <property type="entry name" value="dsRNA-binding domain-like"/>
    <property type="match status" value="1"/>
</dbReference>
<dbReference type="SUPFAM" id="SSF54211">
    <property type="entry name" value="Ribosomal protein S5 domain 2-like"/>
    <property type="match status" value="1"/>
</dbReference>
<dbReference type="PROSITE" id="PS00585">
    <property type="entry name" value="RIBOSOMAL_S5"/>
    <property type="match status" value="1"/>
</dbReference>
<dbReference type="PROSITE" id="PS50881">
    <property type="entry name" value="S5_DSRBD"/>
    <property type="match status" value="1"/>
</dbReference>
<proteinExistence type="inferred from homology"/>
<keyword id="KW-1185">Reference proteome</keyword>
<keyword id="KW-0687">Ribonucleoprotein</keyword>
<keyword id="KW-0689">Ribosomal protein</keyword>
<keyword id="KW-0694">RNA-binding</keyword>
<keyword id="KW-0699">rRNA-binding</keyword>
<comment type="function">
    <text evidence="1">With S4 and S12 plays an important role in translational accuracy.</text>
</comment>
<comment type="function">
    <text evidence="1">Located at the back of the 30S subunit body where it stabilizes the conformation of the head with respect to the body.</text>
</comment>
<comment type="subunit">
    <text evidence="1">Part of the 30S ribosomal subunit. Contacts proteins S4 and S8.</text>
</comment>
<comment type="domain">
    <text>The N-terminal domain interacts with the head of the 30S subunit; the C-terminal domain interacts with the body and contacts protein S4. The interaction surface between S4 and S5 is involved in control of translational fidelity.</text>
</comment>
<comment type="similarity">
    <text evidence="1">Belongs to the universal ribosomal protein uS5 family.</text>
</comment>
<organism>
    <name type="scientific">Ruegeria sp. (strain TM1040)</name>
    <name type="common">Silicibacter sp.</name>
    <dbReference type="NCBI Taxonomy" id="292414"/>
    <lineage>
        <taxon>Bacteria</taxon>
        <taxon>Pseudomonadati</taxon>
        <taxon>Pseudomonadota</taxon>
        <taxon>Alphaproteobacteria</taxon>
        <taxon>Rhodobacterales</taxon>
        <taxon>Roseobacteraceae</taxon>
        <taxon>Ruegeria</taxon>
    </lineage>
</organism>
<name>RS5_RUEST</name>
<protein>
    <recommendedName>
        <fullName evidence="1">Small ribosomal subunit protein uS5</fullName>
    </recommendedName>
    <alternativeName>
        <fullName evidence="3">30S ribosomal protein S5</fullName>
    </alternativeName>
</protein>
<sequence>MAERENRRGNRRDREETPEFADRLVAINRVSKTVKGGKRFGFAALVVVGDQKGRVGFGKGKAKEVPEAIRKATEQAKRQMIRVPLKEGRTLHHDMYGRHGAGKVVMRTAPEGTGIIAGGPMRAVFEMLGIKDVVSKSVGSQNPYNMIRATIDGLKKEQSPRSVAQRRGKKVADILPKRDEAPAEAEA</sequence>
<gene>
    <name evidence="1" type="primary">rpsE</name>
    <name type="ordered locus">TM1040_0271</name>
</gene>